<geneLocation type="mitochondrion"/>
<comment type="function">
    <text evidence="2">Component of the ubiquinol-cytochrome c reductase complex (complex III or cytochrome b-c1 complex) that is part of the mitochondrial respiratory chain. The b-c1 complex mediates electron transfer from ubiquinol to cytochrome c. Contributes to the generation of a proton gradient across the mitochondrial membrane that is then used for ATP synthesis.</text>
</comment>
<comment type="cofactor">
    <cofactor evidence="2">
        <name>heme b</name>
        <dbReference type="ChEBI" id="CHEBI:60344"/>
    </cofactor>
    <text evidence="2">Binds 2 heme b groups non-covalently.</text>
</comment>
<comment type="subunit">
    <text evidence="2">The cytochrome bc1 complex contains 11 subunits: 3 respiratory subunits (MT-CYB, CYC1 and UQCRFS1), 2 core proteins (UQCRC1 and UQCRC2) and 6 low-molecular weight proteins (UQCRH/QCR6, UQCRB/QCR7, UQCRQ/QCR8, UQCR10/QCR9, UQCR11/QCR10 and a cleavage product of UQCRFS1). This cytochrome bc1 complex then forms a dimer.</text>
</comment>
<comment type="subcellular location">
    <subcellularLocation>
        <location evidence="2">Mitochondrion inner membrane</location>
        <topology evidence="2">Multi-pass membrane protein</topology>
    </subcellularLocation>
</comment>
<comment type="miscellaneous">
    <text evidence="1">Heme 1 (or BL or b562) is low-potential and absorbs at about 562 nm, and heme 2 (or BH or b566) is high-potential and absorbs at about 566 nm.</text>
</comment>
<comment type="similarity">
    <text evidence="3 4">Belongs to the cytochrome b family.</text>
</comment>
<comment type="caution">
    <text evidence="2">The full-length protein contains only eight transmembrane helices, not nine as predicted by bioinformatics tools.</text>
</comment>
<protein>
    <recommendedName>
        <fullName>Cytochrome b</fullName>
    </recommendedName>
    <alternativeName>
        <fullName>Complex III subunit 3</fullName>
    </alternativeName>
    <alternativeName>
        <fullName>Complex III subunit III</fullName>
    </alternativeName>
    <alternativeName>
        <fullName>Cytochrome b-c1 complex subunit 3</fullName>
    </alternativeName>
    <alternativeName>
        <fullName>Ubiquinol-cytochrome-c reductase complex cytochrome b subunit</fullName>
    </alternativeName>
</protein>
<name>CYB_ARTFI</name>
<reference key="1">
    <citation type="submission" date="1996-08" db="EMBL/GenBank/DDBJ databases">
        <title>Phylogenetic accuracy, stability, and congruence: relationships within and among the New World bat genera Artibeus, Dermanura, and Koopmania.</title>
        <authorList>
            <person name="den Bussche R.A."/>
            <person name="Hudgeons J.L."/>
            <person name="Baker R.J."/>
        </authorList>
    </citation>
    <scope>NUCLEOTIDE SEQUENCE [GENOMIC DNA]</scope>
    <source>
        <strain>Isolate TK 18991</strain>
    </source>
</reference>
<evidence type="ECO:0000250" key="1"/>
<evidence type="ECO:0000250" key="2">
    <source>
        <dbReference type="UniProtKB" id="P00157"/>
    </source>
</evidence>
<evidence type="ECO:0000255" key="3">
    <source>
        <dbReference type="PROSITE-ProRule" id="PRU00967"/>
    </source>
</evidence>
<evidence type="ECO:0000255" key="4">
    <source>
        <dbReference type="PROSITE-ProRule" id="PRU00968"/>
    </source>
</evidence>
<organism>
    <name type="scientific">Artibeus fimbriatus</name>
    <name type="common">Fringed fruit-eating bat</name>
    <dbReference type="NCBI Taxonomy" id="51010"/>
    <lineage>
        <taxon>Eukaryota</taxon>
        <taxon>Metazoa</taxon>
        <taxon>Chordata</taxon>
        <taxon>Craniata</taxon>
        <taxon>Vertebrata</taxon>
        <taxon>Euteleostomi</taxon>
        <taxon>Mammalia</taxon>
        <taxon>Eutheria</taxon>
        <taxon>Laurasiatheria</taxon>
        <taxon>Chiroptera</taxon>
        <taxon>Yangochiroptera</taxon>
        <taxon>Phyllostomidae</taxon>
        <taxon>Stenodermatinae</taxon>
        <taxon>Artibeus</taxon>
    </lineage>
</organism>
<dbReference type="EMBL" id="U66498">
    <property type="protein sequence ID" value="AAB06769.1"/>
    <property type="molecule type" value="Genomic_DNA"/>
</dbReference>
<dbReference type="SMR" id="Q95728"/>
<dbReference type="GO" id="GO:0005743">
    <property type="term" value="C:mitochondrial inner membrane"/>
    <property type="evidence" value="ECO:0007669"/>
    <property type="project" value="UniProtKB-SubCell"/>
</dbReference>
<dbReference type="GO" id="GO:0045275">
    <property type="term" value="C:respiratory chain complex III"/>
    <property type="evidence" value="ECO:0007669"/>
    <property type="project" value="InterPro"/>
</dbReference>
<dbReference type="GO" id="GO:0046872">
    <property type="term" value="F:metal ion binding"/>
    <property type="evidence" value="ECO:0007669"/>
    <property type="project" value="UniProtKB-KW"/>
</dbReference>
<dbReference type="GO" id="GO:0008121">
    <property type="term" value="F:ubiquinol-cytochrome-c reductase activity"/>
    <property type="evidence" value="ECO:0007669"/>
    <property type="project" value="InterPro"/>
</dbReference>
<dbReference type="GO" id="GO:0006122">
    <property type="term" value="P:mitochondrial electron transport, ubiquinol to cytochrome c"/>
    <property type="evidence" value="ECO:0007669"/>
    <property type="project" value="TreeGrafter"/>
</dbReference>
<dbReference type="CDD" id="cd00290">
    <property type="entry name" value="cytochrome_b_C"/>
    <property type="match status" value="1"/>
</dbReference>
<dbReference type="CDD" id="cd00284">
    <property type="entry name" value="Cytochrome_b_N"/>
    <property type="match status" value="1"/>
</dbReference>
<dbReference type="FunFam" id="1.20.810.10:FF:000002">
    <property type="entry name" value="Cytochrome b"/>
    <property type="match status" value="1"/>
</dbReference>
<dbReference type="Gene3D" id="1.20.810.10">
    <property type="entry name" value="Cytochrome Bc1 Complex, Chain C"/>
    <property type="match status" value="1"/>
</dbReference>
<dbReference type="InterPro" id="IPR005798">
    <property type="entry name" value="Cyt_b/b6_C"/>
</dbReference>
<dbReference type="InterPro" id="IPR036150">
    <property type="entry name" value="Cyt_b/b6_C_sf"/>
</dbReference>
<dbReference type="InterPro" id="IPR005797">
    <property type="entry name" value="Cyt_b/b6_N"/>
</dbReference>
<dbReference type="InterPro" id="IPR027387">
    <property type="entry name" value="Cytb/b6-like_sf"/>
</dbReference>
<dbReference type="InterPro" id="IPR030689">
    <property type="entry name" value="Cytochrome_b"/>
</dbReference>
<dbReference type="InterPro" id="IPR048260">
    <property type="entry name" value="Cytochrome_b_C_euk/bac"/>
</dbReference>
<dbReference type="InterPro" id="IPR048259">
    <property type="entry name" value="Cytochrome_b_N_euk/bac"/>
</dbReference>
<dbReference type="InterPro" id="IPR016174">
    <property type="entry name" value="Di-haem_cyt_TM"/>
</dbReference>
<dbReference type="PANTHER" id="PTHR19271">
    <property type="entry name" value="CYTOCHROME B"/>
    <property type="match status" value="1"/>
</dbReference>
<dbReference type="PANTHER" id="PTHR19271:SF16">
    <property type="entry name" value="CYTOCHROME B"/>
    <property type="match status" value="1"/>
</dbReference>
<dbReference type="Pfam" id="PF00032">
    <property type="entry name" value="Cytochrom_B_C"/>
    <property type="match status" value="1"/>
</dbReference>
<dbReference type="Pfam" id="PF00033">
    <property type="entry name" value="Cytochrome_B"/>
    <property type="match status" value="1"/>
</dbReference>
<dbReference type="PIRSF" id="PIRSF038885">
    <property type="entry name" value="COB"/>
    <property type="match status" value="1"/>
</dbReference>
<dbReference type="SUPFAM" id="SSF81648">
    <property type="entry name" value="a domain/subunit of cytochrome bc1 complex (Ubiquinol-cytochrome c reductase)"/>
    <property type="match status" value="1"/>
</dbReference>
<dbReference type="SUPFAM" id="SSF81342">
    <property type="entry name" value="Transmembrane di-heme cytochromes"/>
    <property type="match status" value="1"/>
</dbReference>
<dbReference type="PROSITE" id="PS51003">
    <property type="entry name" value="CYTB_CTER"/>
    <property type="match status" value="1"/>
</dbReference>
<dbReference type="PROSITE" id="PS51002">
    <property type="entry name" value="CYTB_NTER"/>
    <property type="match status" value="1"/>
</dbReference>
<accession>Q95728</accession>
<keyword id="KW-0249">Electron transport</keyword>
<keyword id="KW-0349">Heme</keyword>
<keyword id="KW-0408">Iron</keyword>
<keyword id="KW-0472">Membrane</keyword>
<keyword id="KW-0479">Metal-binding</keyword>
<keyword id="KW-0496">Mitochondrion</keyword>
<keyword id="KW-0999">Mitochondrion inner membrane</keyword>
<keyword id="KW-0679">Respiratory chain</keyword>
<keyword id="KW-0812">Transmembrane</keyword>
<keyword id="KW-1133">Transmembrane helix</keyword>
<keyword id="KW-0813">Transport</keyword>
<keyword id="KW-0830">Ubiquinone</keyword>
<sequence length="379" mass="42787">MTNIRKTHPLLKIINSSFVDLPAPSSLSSWWNFGSLLGICLGVQILTGLFLAMHYTSDTATAFNSVTHICRDVNYGWLLWYLHANGASMFFICLYLHVGRGLYYGSYMYSETWNIGILLLFAVMATAFMGYVLPWGQMSFWGATVITNLLSAIPYIGTDLVQWIWGGFSVDKATLTRFFAFHFLLPFIVTALVMVHLLFLHETGSNNPTGIPSDPDMIPFHPYYTIKDILGFLVMLTALATLVLFSPDLLGDPDNYIPANLLITPPHIKPEWYFLFAYAILRSIPNKLGGVLALVMSILILAIVPVLHMSKQRSMMFRPLSQCLFWLLVAVLFTLTWIGGQPVEHPYIIIGQTASVLYFLIILFLMPMTSLVENYLLKW</sequence>
<gene>
    <name type="primary">MT-CYB</name>
    <name type="synonym">COB</name>
    <name type="synonym">CYTB</name>
    <name type="synonym">MTCYB</name>
</gene>
<feature type="chain" id="PRO_0000060626" description="Cytochrome b">
    <location>
        <begin position="1"/>
        <end position="379"/>
    </location>
</feature>
<feature type="transmembrane region" description="Helical" evidence="2">
    <location>
        <begin position="33"/>
        <end position="53"/>
    </location>
</feature>
<feature type="transmembrane region" description="Helical" evidence="2">
    <location>
        <begin position="77"/>
        <end position="98"/>
    </location>
</feature>
<feature type="transmembrane region" description="Helical" evidence="2">
    <location>
        <begin position="113"/>
        <end position="133"/>
    </location>
</feature>
<feature type="transmembrane region" description="Helical" evidence="2">
    <location>
        <begin position="178"/>
        <end position="198"/>
    </location>
</feature>
<feature type="transmembrane region" description="Helical" evidence="2">
    <location>
        <begin position="226"/>
        <end position="246"/>
    </location>
</feature>
<feature type="transmembrane region" description="Helical" evidence="2">
    <location>
        <begin position="288"/>
        <end position="308"/>
    </location>
</feature>
<feature type="transmembrane region" description="Helical" evidence="2">
    <location>
        <begin position="320"/>
        <end position="340"/>
    </location>
</feature>
<feature type="transmembrane region" description="Helical" evidence="2">
    <location>
        <begin position="347"/>
        <end position="367"/>
    </location>
</feature>
<feature type="binding site" description="axial binding residue" evidence="2">
    <location>
        <position position="83"/>
    </location>
    <ligand>
        <name>heme b</name>
        <dbReference type="ChEBI" id="CHEBI:60344"/>
        <label>b562</label>
    </ligand>
    <ligandPart>
        <name>Fe</name>
        <dbReference type="ChEBI" id="CHEBI:18248"/>
    </ligandPart>
</feature>
<feature type="binding site" description="axial binding residue" evidence="2">
    <location>
        <position position="97"/>
    </location>
    <ligand>
        <name>heme b</name>
        <dbReference type="ChEBI" id="CHEBI:60344"/>
        <label>b566</label>
    </ligand>
    <ligandPart>
        <name>Fe</name>
        <dbReference type="ChEBI" id="CHEBI:18248"/>
    </ligandPart>
</feature>
<feature type="binding site" description="axial binding residue" evidence="2">
    <location>
        <position position="182"/>
    </location>
    <ligand>
        <name>heme b</name>
        <dbReference type="ChEBI" id="CHEBI:60344"/>
        <label>b562</label>
    </ligand>
    <ligandPart>
        <name>Fe</name>
        <dbReference type="ChEBI" id="CHEBI:18248"/>
    </ligandPart>
</feature>
<feature type="binding site" description="axial binding residue" evidence="2">
    <location>
        <position position="196"/>
    </location>
    <ligand>
        <name>heme b</name>
        <dbReference type="ChEBI" id="CHEBI:60344"/>
        <label>b566</label>
    </ligand>
    <ligandPart>
        <name>Fe</name>
        <dbReference type="ChEBI" id="CHEBI:18248"/>
    </ligandPart>
</feature>
<feature type="binding site" evidence="2">
    <location>
        <position position="201"/>
    </location>
    <ligand>
        <name>a ubiquinone</name>
        <dbReference type="ChEBI" id="CHEBI:16389"/>
    </ligand>
</feature>
<proteinExistence type="inferred from homology"/>